<proteinExistence type="inferred from homology"/>
<comment type="function">
    <text evidence="1">Probably involved in DNA replication. Binds the origin of replication (ori) (By similarity).</text>
</comment>
<comment type="similarity">
    <text evidence="3">Belongs to the herpesviridae OriBP family.</text>
</comment>
<evidence type="ECO:0000250" key="1"/>
<evidence type="ECO:0000255" key="2">
    <source>
        <dbReference type="PROSITE-ProRule" id="PRU00541"/>
    </source>
</evidence>
<evidence type="ECO:0000305" key="3"/>
<keyword id="KW-0067">ATP-binding</keyword>
<keyword id="KW-0235">DNA replication</keyword>
<keyword id="KW-0238">DNA-binding</keyword>
<keyword id="KW-0547">Nucleotide-binding</keyword>
<keyword id="KW-1185">Reference proteome</keyword>
<name>OBP_HHV6U</name>
<accession>P52378</accession>
<sequence length="780" mass="89717">MENRFQNDTLFSEWFGQSLSDVRFPDNVTVYSQADSAVSFENVRQPIKLVRAAMGSGKTTALIHFLKQVPRELSVLLISCRKTFAAEILHRFTLNGLKDFELYCDITERQINNRKVIVQIESLHRLTENYDVLILDEIMSIIKQFYSKTMTKTKEVDCKFLSLIKNSSHVIAMDATLTRHVVEFFAAFKPDTQIALIRNTFVSAMFSNRIAYFCDTFFGKEFSFFARLEDKLRWDKKLCLFCSTVLAAEYMYDLIRSRFPLKKVLLLTSKQGKCSSIESWIRYDVVIYTSVVTVGLSFEPVYFSSLFVYIQLAKGGPDMVSVFQSIGRVRRVIDEDIYIYMNPVLIRSYDPLAPIAIPPCSDWSVAEQSIISESCIDFRGKCSGAHKYNFCSVLKSLFRYRHYIEKTTITSLSDSLFLLCSLLCENSIKVDIVGNGFPMRKEVFLSFLQILVEECHFIEKKITLPGDDMTFQEIISSRETIMNGDFYENGDQLLHKDYITDMGKFRATFLSPGVDIFIASDIVYDLKNESKRYVFVNVWLQKCVSAGVESTEIERVFCERIKCYMLPKSFLCDEYFVLGDISGVYEWGMLIDLAFLAEMIRKDLKLKSCTDTTTDISEDDLLLCAARRSSDILQIMQLVFTVHVQFFQKYSLQTLQLFNKLRGMRIVTGVFSIEKFSISILRLFFKCAFNMTLSASRPRYIPGKAYRNLTKNDMENMLDNWEISRTNLKTCKELRKALTEASRARRKQTIYKLQGSDISLSVSEVGVFGQHASPGVCVSS</sequence>
<protein>
    <recommendedName>
        <fullName>Replication origin-binding protein</fullName>
        <shortName>OBP</shortName>
    </recommendedName>
</protein>
<feature type="chain" id="PRO_0000115870" description="Replication origin-binding protein">
    <location>
        <begin position="1"/>
        <end position="780"/>
    </location>
</feature>
<feature type="domain" description="Helicase ATP-binding" evidence="2">
    <location>
        <begin position="39"/>
        <end position="195"/>
    </location>
</feature>
<feature type="binding site" evidence="2">
    <location>
        <begin position="52"/>
        <end position="59"/>
    </location>
    <ligand>
        <name>ATP</name>
        <dbReference type="ChEBI" id="CHEBI:30616"/>
    </ligand>
</feature>
<organism>
    <name type="scientific">Human herpesvirus 6A (strain Uganda-1102)</name>
    <name type="common">HHV-6 variant A</name>
    <name type="synonym">Human B lymphotropic virus</name>
    <dbReference type="NCBI Taxonomy" id="10370"/>
    <lineage>
        <taxon>Viruses</taxon>
        <taxon>Duplodnaviria</taxon>
        <taxon>Heunggongvirae</taxon>
        <taxon>Peploviricota</taxon>
        <taxon>Herviviricetes</taxon>
        <taxon>Herpesvirales</taxon>
        <taxon>Orthoherpesviridae</taxon>
        <taxon>Betaherpesvirinae</taxon>
        <taxon>Roseolovirus</taxon>
        <taxon>Roseolovirus humanbeta6a</taxon>
        <taxon>Human betaherpesvirus 6A</taxon>
    </lineage>
</organism>
<dbReference type="EMBL" id="X83413">
    <property type="protein sequence ID" value="CAA58365.1"/>
    <property type="molecule type" value="Genomic_DNA"/>
</dbReference>
<dbReference type="EMBL" id="M68963">
    <property type="protein sequence ID" value="AAA65581.1"/>
    <property type="molecule type" value="Genomic_DNA"/>
</dbReference>
<dbReference type="RefSeq" id="NP_042966.1">
    <property type="nucleotide sequence ID" value="NC_001664.2"/>
</dbReference>
<dbReference type="DNASU" id="1487954"/>
<dbReference type="GeneID" id="1487954"/>
<dbReference type="KEGG" id="vg:1487954"/>
<dbReference type="Proteomes" id="UP000009295">
    <property type="component" value="Segment"/>
</dbReference>
<dbReference type="GO" id="GO:0005524">
    <property type="term" value="F:ATP binding"/>
    <property type="evidence" value="ECO:0007669"/>
    <property type="project" value="UniProtKB-KW"/>
</dbReference>
<dbReference type="GO" id="GO:0016887">
    <property type="term" value="F:ATP hydrolysis activity"/>
    <property type="evidence" value="ECO:0007669"/>
    <property type="project" value="InterPro"/>
</dbReference>
<dbReference type="GO" id="GO:0003688">
    <property type="term" value="F:DNA replication origin binding"/>
    <property type="evidence" value="ECO:0007669"/>
    <property type="project" value="InterPro"/>
</dbReference>
<dbReference type="GO" id="GO:0006260">
    <property type="term" value="P:DNA replication"/>
    <property type="evidence" value="ECO:0007669"/>
    <property type="project" value="UniProtKB-KW"/>
</dbReference>
<dbReference type="Gene3D" id="3.40.50.300">
    <property type="entry name" value="P-loop containing nucleotide triphosphate hydrolases"/>
    <property type="match status" value="1"/>
</dbReference>
<dbReference type="InterPro" id="IPR003593">
    <property type="entry name" value="AAA+_ATPase"/>
</dbReference>
<dbReference type="InterPro" id="IPR014001">
    <property type="entry name" value="Helicase_ATP-bd"/>
</dbReference>
<dbReference type="InterPro" id="IPR027417">
    <property type="entry name" value="P-loop_NTPase"/>
</dbReference>
<dbReference type="InterPro" id="IPR003450">
    <property type="entry name" value="Replication_origin-bd"/>
</dbReference>
<dbReference type="Pfam" id="PF02399">
    <property type="entry name" value="Herpes_ori_bp"/>
    <property type="match status" value="1"/>
</dbReference>
<dbReference type="SMART" id="SM00382">
    <property type="entry name" value="AAA"/>
    <property type="match status" value="1"/>
</dbReference>
<dbReference type="SMART" id="SM00487">
    <property type="entry name" value="DEXDc"/>
    <property type="match status" value="1"/>
</dbReference>
<dbReference type="SUPFAM" id="SSF52540">
    <property type="entry name" value="P-loop containing nucleoside triphosphate hydrolases"/>
    <property type="match status" value="1"/>
</dbReference>
<dbReference type="PROSITE" id="PS51192">
    <property type="entry name" value="HELICASE_ATP_BIND_1"/>
    <property type="match status" value="1"/>
</dbReference>
<organismHost>
    <name type="scientific">Homo sapiens</name>
    <name type="common">Human</name>
    <dbReference type="NCBI Taxonomy" id="9606"/>
</organismHost>
<reference key="1">
    <citation type="journal article" date="1995" name="Virology">
        <title>The DNA sequence of human herpesvirus-6: structure, coding content, and genome evolution.</title>
        <authorList>
            <person name="Gompels U.A."/>
            <person name="Nicholas J."/>
            <person name="Lawrence G.L."/>
            <person name="Jones M."/>
            <person name="Thomson B.J."/>
            <person name="Martin M.E.D."/>
            <person name="Efstathiou S."/>
            <person name="Craxton M.A."/>
            <person name="Macaulay H.A."/>
        </authorList>
    </citation>
    <scope>NUCLEOTIDE SEQUENCE [LARGE SCALE GENOMIC DNA]</scope>
</reference>
<reference key="2">
    <citation type="journal article" date="1995" name="J. Gen. Virol.">
        <title>Human herpesvirus 6 (strain U1102) encodes homologues of the conserved herpesvirus glycoprotein gM and the alphaherpesvirus origin-binding protein.</title>
        <authorList>
            <person name="Lawrence G.L."/>
            <person name="Nicholas J."/>
            <person name="Barrell B.G."/>
        </authorList>
    </citation>
    <scope>NUCLEOTIDE SEQUENCE [GENOMIC DNA] OF 1-703</scope>
</reference>
<gene>
    <name type="primary">U73</name>
    <name type="synonym">19R</name>
    <name type="synonym">HDRF0</name>
</gene>